<sequence>MGARASVLSGGKLDKWEKIRLRPGGKKKYRLKHIVWASRELERYALNPGLLETSEGCKQIIGQLQPAIQTGTEELRSLYNTVATLYCVHKGIDVKDTKEALEKMEEEQNKSKKKAQQAAADTGNNSQVSQNYPIVQNLQGQMVHQAISPRTLNAWVKVIEEKAFSPEVIPMFSALSEGATPQDLNTMLNTVGGHQAAMQMLKETINEEAAEWDRLHPVHAGPIAPGQMREPRGSDIAGTTSTLQEQIAWMTSNPPIPVGEIYKRWIIVGLNKIVRMYSPVSILDIRQGPKEPFRDYVDRFYKTLRAEQASQDVKNWMTETLLVQNANPDCKTILKALGPQATLEEMMTACQGVGGPSHKARVLAEAMSQATNSVTTAMMQRGNFKGPRKIIKCFNCGKEGHIAKNCRAPRKKGCWRCGKEGHQLKDCTERQANFLRENLAFPQGKAGELSPKQTRANSPTSRELRVWGRDNPLSKTGAERQGTVSFNFPQITLWQRPLVAIKIGGQLKEALLDTGADDTVLEEMNLPGKWKPKMIGGIGGFIKVRQYDQIPIEICGQKAIGTVLVGPTPVNIIGRNLLTQIGCTLNFPISPIETVPVKLKPGMDGPKVKQWPLTEEKIKALTEICTDMEKEGKISRIGPENPYNTPIFAIKKKDSTKWRKLVDFRELNKRTQDFWEVQLGIPHPAGLKKKKSVTVLDVGDAYFSVPLDEDFRKYTAFTISSINNETPGIRYQYNVLPQGWKGSPAIFQSSMTKILEPFRKQNPEMVIYQYMDDLYVGSDLEIGQHRTKIEKLREHLLRWGFTRPDKKHQKEPPFLWMGYELHPDKWTVQSIKLPEKESWTVNDIQNLVERLNWASQIYPGIKVRQLCKLLRGTKALTEVIPLTEEAELELAENREILKEPVHGVYYDPSKDLIAEIQKQGHGQWTYQIYQEPFKNLKTGKYARMRGAHTNDVKQLAEAVQRISTESIVIWGRTPKFRLPIQKETWETWWAEYWQATWIPEWEFVNTPPLVKLWYQLEKEPIIGAETFYVDGAANRETKLGKAGYVTDRGRQKVVPLTDTTNQKTELQAINLALQDSGLEVNIVTDSQYALGIIQAQPDKSESELVNQIIEQLIKKEKVYLAWVPAHKGIGGNEQVDKLVSQGIRKVLFLDGIDKAQEEHEKYHNNWRAMASDFNLPPVVAKEIVASCDKCQLKGEAMHGQVDCSPGIWQLDCTHLEGKVILVAVHVASGYIEAEVIPAETGQETAYFLLKLAGRWPVKVVHTDNGSNFTSAAVKAACWWAGIKQEFGIPYNPQSQGVVESMNKELKKIIGQVRDQAEHLKTAVQMAVFIHNFKRRRGIGGYSAGERIIDIIATDIQTKELQKQIIKIQNFRVYYRDSRDPIWKGPAKLLWKGEGAVVIQDKSDIKVVPRRKVKIIRDYGKQMAGDDCVASRQDED</sequence>
<protein>
    <recommendedName>
        <fullName>Gag-Pol polyprotein</fullName>
    </recommendedName>
    <alternativeName>
        <fullName>Pr160Gag-Pol</fullName>
    </alternativeName>
    <component>
        <recommendedName>
            <fullName>Matrix protein p17</fullName>
            <shortName>MA</shortName>
        </recommendedName>
    </component>
    <component>
        <recommendedName>
            <fullName>Capsid protein p24</fullName>
            <shortName>CA</shortName>
        </recommendedName>
    </component>
    <component>
        <recommendedName>
            <fullName evidence="7">Spacer peptide 1</fullName>
            <shortName>SP1</shortName>
        </recommendedName>
        <alternativeName>
            <fullName>p2</fullName>
        </alternativeName>
    </component>
    <component>
        <recommendedName>
            <fullName>Nucleocapsid protein p7</fullName>
            <shortName>NC</shortName>
        </recommendedName>
    </component>
    <component>
        <recommendedName>
            <fullName>Transframe peptide</fullName>
            <shortName>TF</shortName>
        </recommendedName>
    </component>
    <component>
        <recommendedName>
            <fullName>p6-pol</fullName>
            <shortName>p6*</shortName>
        </recommendedName>
    </component>
    <component>
        <recommendedName>
            <fullName>Protease</fullName>
            <ecNumber>3.4.23.16</ecNumber>
        </recommendedName>
        <alternativeName>
            <fullName>PR</fullName>
        </alternativeName>
        <alternativeName>
            <fullName>Retropepsin</fullName>
        </alternativeName>
    </component>
    <component>
        <recommendedName>
            <fullName>Reverse transcriptase/ribonuclease H</fullName>
            <ecNumber>2.7.7.49</ecNumber>
            <ecNumber>2.7.7.7</ecNumber>
            <ecNumber>3.1.26.13</ecNumber>
        </recommendedName>
        <alternativeName>
            <fullName>Exoribonuclease H</fullName>
            <ecNumber>3.1.13.2</ecNumber>
        </alternativeName>
        <alternativeName>
            <fullName>p66 RT</fullName>
        </alternativeName>
    </component>
    <component>
        <recommendedName>
            <fullName>p51 RT</fullName>
        </recommendedName>
    </component>
    <component>
        <recommendedName>
            <fullName>p15</fullName>
        </recommendedName>
    </component>
    <component>
        <recommendedName>
            <fullName>Integrase</fullName>
            <shortName>IN</shortName>
            <ecNumber evidence="5">2.7.7.-</ecNumber>
            <ecNumber evidence="5">3.1.-.-</ecNumber>
        </recommendedName>
    </component>
</protein>
<gene>
    <name type="primary">gag-pol</name>
</gene>
<organism>
    <name type="scientific">Human immunodeficiency virus type 1 group M subtype D (isolate ELI)</name>
    <name type="common">HIV-1</name>
    <dbReference type="NCBI Taxonomy" id="11689"/>
    <lineage>
        <taxon>Viruses</taxon>
        <taxon>Riboviria</taxon>
        <taxon>Pararnavirae</taxon>
        <taxon>Artverviricota</taxon>
        <taxon>Revtraviricetes</taxon>
        <taxon>Ortervirales</taxon>
        <taxon>Retroviridae</taxon>
        <taxon>Orthoretrovirinae</taxon>
        <taxon>Lentivirus</taxon>
        <taxon>Human immunodeficiency virus type 1</taxon>
    </lineage>
</organism>
<reference key="1">
    <citation type="journal article" date="1986" name="Cell">
        <title>Genetic variability of the AIDS virus: nucleotide sequence analysis of two isolates from African patients.</title>
        <authorList>
            <person name="Alizon M."/>
            <person name="Wain-Hobson S."/>
            <person name="Montagnier L."/>
            <person name="Sonigo P."/>
        </authorList>
    </citation>
    <scope>NUCLEOTIDE SEQUENCE</scope>
</reference>
<reference key="2">
    <citation type="journal article" date="1996" name="Curr. Top. Microbiol. Immunol.">
        <title>Proteolytic processing and particle maturation.</title>
        <authorList>
            <person name="Vogt V.M."/>
        </authorList>
    </citation>
    <scope>REVIEW</scope>
</reference>
<reference key="3">
    <citation type="journal article" date="1999" name="J. Mol. Biol.">
        <title>Structural biology of HIV.</title>
        <authorList>
            <person name="Turner B.G."/>
            <person name="Summers M.F."/>
        </authorList>
    </citation>
    <scope>REVIEW</scope>
</reference>
<reference key="4">
    <citation type="journal article" date="2001" name="Annu. Rev. Genet.">
        <title>Mechanisms of retroviral recombination.</title>
        <authorList>
            <person name="Negroni M."/>
            <person name="Buc H."/>
        </authorList>
    </citation>
    <scope>REVIEW</scope>
</reference>
<reference key="5">
    <citation type="journal article" date="2002" name="Genome Biol.">
        <title>Retroviral proteases.</title>
        <authorList>
            <person name="Dunn B.M."/>
            <person name="Goodenow M.M."/>
            <person name="Gustchina A."/>
            <person name="Wlodawer A."/>
        </authorList>
    </citation>
    <scope>REVIEW</scope>
</reference>
<reference key="6">
    <citation type="journal article" date="2003" name="Biochim. Biophys. Acta">
        <title>Role of HIV-1 Gag domains in viral assembly.</title>
        <authorList>
            <person name="Scarlata S."/>
            <person name="Carter C."/>
        </authorList>
    </citation>
    <scope>REVIEW</scope>
</reference>
<accession>P04589</accession>
<accession>Q77906</accession>
<dbReference type="EC" id="3.4.23.16"/>
<dbReference type="EC" id="2.7.7.49"/>
<dbReference type="EC" id="2.7.7.7"/>
<dbReference type="EC" id="3.1.26.13"/>
<dbReference type="EC" id="3.1.13.2"/>
<dbReference type="EC" id="2.7.7.-" evidence="5"/>
<dbReference type="EC" id="3.1.-.-" evidence="5"/>
<dbReference type="EMBL" id="K03454">
    <property type="protein sequence ID" value="AAA44325.1"/>
    <property type="status" value="ALT_SEQ"/>
    <property type="molecule type" value="Genomic_DNA"/>
</dbReference>
<dbReference type="SMR" id="P04589"/>
<dbReference type="MEROPS" id="A02.001"/>
<dbReference type="PRO" id="PR:P04589"/>
<dbReference type="Proteomes" id="UP000007693">
    <property type="component" value="Segment"/>
</dbReference>
<dbReference type="GO" id="GO:0043657">
    <property type="term" value="C:host cell"/>
    <property type="evidence" value="ECO:0007669"/>
    <property type="project" value="GOC"/>
</dbReference>
<dbReference type="GO" id="GO:0042025">
    <property type="term" value="C:host cell nucleus"/>
    <property type="evidence" value="ECO:0007669"/>
    <property type="project" value="UniProtKB-SubCell"/>
</dbReference>
<dbReference type="GO" id="GO:0020002">
    <property type="term" value="C:host cell plasma membrane"/>
    <property type="evidence" value="ECO:0007669"/>
    <property type="project" value="UniProtKB-SubCell"/>
</dbReference>
<dbReference type="GO" id="GO:0072494">
    <property type="term" value="C:host multivesicular body"/>
    <property type="evidence" value="ECO:0007669"/>
    <property type="project" value="UniProtKB-SubCell"/>
</dbReference>
<dbReference type="GO" id="GO:0016020">
    <property type="term" value="C:membrane"/>
    <property type="evidence" value="ECO:0007669"/>
    <property type="project" value="UniProtKB-KW"/>
</dbReference>
<dbReference type="GO" id="GO:0019013">
    <property type="term" value="C:viral nucleocapsid"/>
    <property type="evidence" value="ECO:0007669"/>
    <property type="project" value="UniProtKB-KW"/>
</dbReference>
<dbReference type="GO" id="GO:0055036">
    <property type="term" value="C:virion membrane"/>
    <property type="evidence" value="ECO:0007669"/>
    <property type="project" value="UniProtKB-SubCell"/>
</dbReference>
<dbReference type="GO" id="GO:0004190">
    <property type="term" value="F:aspartic-type endopeptidase activity"/>
    <property type="evidence" value="ECO:0007669"/>
    <property type="project" value="UniProtKB-KW"/>
</dbReference>
<dbReference type="GO" id="GO:0003677">
    <property type="term" value="F:DNA binding"/>
    <property type="evidence" value="ECO:0007669"/>
    <property type="project" value="UniProtKB-KW"/>
</dbReference>
<dbReference type="GO" id="GO:0003887">
    <property type="term" value="F:DNA-directed DNA polymerase activity"/>
    <property type="evidence" value="ECO:0007669"/>
    <property type="project" value="UniProtKB-KW"/>
</dbReference>
<dbReference type="GO" id="GO:0004533">
    <property type="term" value="F:exoribonuclease H activity"/>
    <property type="evidence" value="ECO:0007669"/>
    <property type="project" value="UniProtKB-EC"/>
</dbReference>
<dbReference type="GO" id="GO:0008289">
    <property type="term" value="F:lipid binding"/>
    <property type="evidence" value="ECO:0007669"/>
    <property type="project" value="UniProtKB-KW"/>
</dbReference>
<dbReference type="GO" id="GO:0035613">
    <property type="term" value="F:RNA stem-loop binding"/>
    <property type="evidence" value="ECO:0007669"/>
    <property type="project" value="TreeGrafter"/>
</dbReference>
<dbReference type="GO" id="GO:0003964">
    <property type="term" value="F:RNA-directed DNA polymerase activity"/>
    <property type="evidence" value="ECO:0007669"/>
    <property type="project" value="UniProtKB-KW"/>
</dbReference>
<dbReference type="GO" id="GO:0004523">
    <property type="term" value="F:RNA-DNA hybrid ribonuclease activity"/>
    <property type="evidence" value="ECO:0007669"/>
    <property type="project" value="InterPro"/>
</dbReference>
<dbReference type="GO" id="GO:0005198">
    <property type="term" value="F:structural molecule activity"/>
    <property type="evidence" value="ECO:0007669"/>
    <property type="project" value="InterPro"/>
</dbReference>
<dbReference type="GO" id="GO:0008270">
    <property type="term" value="F:zinc ion binding"/>
    <property type="evidence" value="ECO:0007669"/>
    <property type="project" value="UniProtKB-KW"/>
</dbReference>
<dbReference type="GO" id="GO:0015074">
    <property type="term" value="P:DNA integration"/>
    <property type="evidence" value="ECO:0007669"/>
    <property type="project" value="UniProtKB-KW"/>
</dbReference>
<dbReference type="GO" id="GO:0006310">
    <property type="term" value="P:DNA recombination"/>
    <property type="evidence" value="ECO:0007669"/>
    <property type="project" value="UniProtKB-KW"/>
</dbReference>
<dbReference type="GO" id="GO:0075713">
    <property type="term" value="P:establishment of integrated proviral latency"/>
    <property type="evidence" value="ECO:0007669"/>
    <property type="project" value="UniProtKB-KW"/>
</dbReference>
<dbReference type="GO" id="GO:0006508">
    <property type="term" value="P:proteolysis"/>
    <property type="evidence" value="ECO:0007669"/>
    <property type="project" value="UniProtKB-KW"/>
</dbReference>
<dbReference type="GO" id="GO:0046718">
    <property type="term" value="P:symbiont entry into host cell"/>
    <property type="evidence" value="ECO:0007669"/>
    <property type="project" value="UniProtKB-KW"/>
</dbReference>
<dbReference type="GO" id="GO:0052151">
    <property type="term" value="P:symbiont-mediated activation of host apoptosis"/>
    <property type="evidence" value="ECO:0007669"/>
    <property type="project" value="UniProtKB-KW"/>
</dbReference>
<dbReference type="GO" id="GO:0039657">
    <property type="term" value="P:symbiont-mediated suppression of host gene expression"/>
    <property type="evidence" value="ECO:0007669"/>
    <property type="project" value="UniProtKB-KW"/>
</dbReference>
<dbReference type="GO" id="GO:0044826">
    <property type="term" value="P:viral genome integration into host DNA"/>
    <property type="evidence" value="ECO:0007669"/>
    <property type="project" value="UniProtKB-KW"/>
</dbReference>
<dbReference type="GO" id="GO:0075732">
    <property type="term" value="P:viral penetration into host nucleus"/>
    <property type="evidence" value="ECO:0007669"/>
    <property type="project" value="UniProtKB-KW"/>
</dbReference>
<dbReference type="GO" id="GO:0075523">
    <property type="term" value="P:viral translational frameshifting"/>
    <property type="evidence" value="ECO:0007669"/>
    <property type="project" value="UniProtKB-KW"/>
</dbReference>
<dbReference type="CDD" id="cd05482">
    <property type="entry name" value="HIV_retropepsin_like"/>
    <property type="match status" value="1"/>
</dbReference>
<dbReference type="CDD" id="cd01645">
    <property type="entry name" value="RT_Rtv"/>
    <property type="match status" value="1"/>
</dbReference>
<dbReference type="FunFam" id="1.10.1200.30:FF:000001">
    <property type="entry name" value="Gag polyprotein"/>
    <property type="match status" value="1"/>
</dbReference>
<dbReference type="FunFam" id="1.10.375.10:FF:000001">
    <property type="entry name" value="Gag polyprotein"/>
    <property type="match status" value="1"/>
</dbReference>
<dbReference type="FunFam" id="4.10.60.10:FF:000001">
    <property type="entry name" value="Gag polyprotein"/>
    <property type="match status" value="1"/>
</dbReference>
<dbReference type="FunFam" id="2.40.70.10:FF:000001">
    <property type="entry name" value="Gag-Pol polyprotein"/>
    <property type="match status" value="1"/>
</dbReference>
<dbReference type="FunFam" id="3.30.420.10:FF:000025">
    <property type="entry name" value="Gag-Pol polyprotein"/>
    <property type="match status" value="1"/>
</dbReference>
<dbReference type="FunFam" id="3.30.420.10:FF:000017">
    <property type="entry name" value="POL polyprotein"/>
    <property type="match status" value="1"/>
</dbReference>
<dbReference type="FunFam" id="3.30.70.270:FF:000016">
    <property type="entry name" value="POL polyprotein"/>
    <property type="match status" value="1"/>
</dbReference>
<dbReference type="Gene3D" id="1.10.10.200">
    <property type="match status" value="1"/>
</dbReference>
<dbReference type="Gene3D" id="1.10.1200.30">
    <property type="match status" value="1"/>
</dbReference>
<dbReference type="Gene3D" id="3.30.70.270">
    <property type="match status" value="3"/>
</dbReference>
<dbReference type="Gene3D" id="2.40.70.10">
    <property type="entry name" value="Acid Proteases"/>
    <property type="match status" value="1"/>
</dbReference>
<dbReference type="Gene3D" id="3.10.10.10">
    <property type="entry name" value="HIV Type 1 Reverse Transcriptase, subunit A, domain 1"/>
    <property type="match status" value="1"/>
</dbReference>
<dbReference type="Gene3D" id="1.10.375.10">
    <property type="entry name" value="Human Immunodeficiency Virus Type 1 Capsid Protein"/>
    <property type="match status" value="1"/>
</dbReference>
<dbReference type="Gene3D" id="1.10.150.90">
    <property type="entry name" value="Immunodeficiency lentiviruses, gag gene matrix protein p17"/>
    <property type="match status" value="1"/>
</dbReference>
<dbReference type="Gene3D" id="2.30.30.10">
    <property type="entry name" value="Integrase, C-terminal domain superfamily, retroviral"/>
    <property type="match status" value="1"/>
</dbReference>
<dbReference type="Gene3D" id="3.30.420.10">
    <property type="entry name" value="Ribonuclease H-like superfamily/Ribonuclease H"/>
    <property type="match status" value="2"/>
</dbReference>
<dbReference type="Gene3D" id="1.20.5.760">
    <property type="entry name" value="Single helix bin"/>
    <property type="match status" value="1"/>
</dbReference>
<dbReference type="Gene3D" id="4.10.60.10">
    <property type="entry name" value="Zinc finger, CCHC-type"/>
    <property type="match status" value="1"/>
</dbReference>
<dbReference type="InterPro" id="IPR001969">
    <property type="entry name" value="Aspartic_peptidase_AS"/>
</dbReference>
<dbReference type="InterPro" id="IPR043502">
    <property type="entry name" value="DNA/RNA_pol_sf"/>
</dbReference>
<dbReference type="InterPro" id="IPR045345">
    <property type="entry name" value="Gag_p24_C"/>
</dbReference>
<dbReference type="InterPro" id="IPR017856">
    <property type="entry name" value="Integrase-like_N"/>
</dbReference>
<dbReference type="InterPro" id="IPR036862">
    <property type="entry name" value="Integrase_C_dom_sf_retrovir"/>
</dbReference>
<dbReference type="InterPro" id="IPR001037">
    <property type="entry name" value="Integrase_C_retrovir"/>
</dbReference>
<dbReference type="InterPro" id="IPR001584">
    <property type="entry name" value="Integrase_cat-core"/>
</dbReference>
<dbReference type="InterPro" id="IPR003308">
    <property type="entry name" value="Integrase_Zn-bd_dom_N"/>
</dbReference>
<dbReference type="InterPro" id="IPR000071">
    <property type="entry name" value="Lentvrl_matrix_N"/>
</dbReference>
<dbReference type="InterPro" id="IPR012344">
    <property type="entry name" value="Matrix_HIV/RSV_N"/>
</dbReference>
<dbReference type="InterPro" id="IPR001995">
    <property type="entry name" value="Peptidase_A2_cat"/>
</dbReference>
<dbReference type="InterPro" id="IPR021109">
    <property type="entry name" value="Peptidase_aspartic_dom_sf"/>
</dbReference>
<dbReference type="InterPro" id="IPR034170">
    <property type="entry name" value="Retropepsin-like_cat_dom"/>
</dbReference>
<dbReference type="InterPro" id="IPR018061">
    <property type="entry name" value="Retropepsins"/>
</dbReference>
<dbReference type="InterPro" id="IPR008916">
    <property type="entry name" value="Retrov_capsid_C"/>
</dbReference>
<dbReference type="InterPro" id="IPR008919">
    <property type="entry name" value="Retrov_capsid_N"/>
</dbReference>
<dbReference type="InterPro" id="IPR010999">
    <property type="entry name" value="Retrovr_matrix"/>
</dbReference>
<dbReference type="InterPro" id="IPR043128">
    <property type="entry name" value="Rev_trsase/Diguanyl_cyclase"/>
</dbReference>
<dbReference type="InterPro" id="IPR012337">
    <property type="entry name" value="RNaseH-like_sf"/>
</dbReference>
<dbReference type="InterPro" id="IPR002156">
    <property type="entry name" value="RNaseH_domain"/>
</dbReference>
<dbReference type="InterPro" id="IPR036397">
    <property type="entry name" value="RNaseH_sf"/>
</dbReference>
<dbReference type="InterPro" id="IPR000477">
    <property type="entry name" value="RT_dom"/>
</dbReference>
<dbReference type="InterPro" id="IPR010659">
    <property type="entry name" value="RVT_connect"/>
</dbReference>
<dbReference type="InterPro" id="IPR010661">
    <property type="entry name" value="RVT_thumb"/>
</dbReference>
<dbReference type="InterPro" id="IPR001878">
    <property type="entry name" value="Znf_CCHC"/>
</dbReference>
<dbReference type="InterPro" id="IPR036875">
    <property type="entry name" value="Znf_CCHC_sf"/>
</dbReference>
<dbReference type="PANTHER" id="PTHR41694">
    <property type="entry name" value="ENDOGENOUS RETROVIRUS GROUP K MEMBER POL PROTEIN"/>
    <property type="match status" value="1"/>
</dbReference>
<dbReference type="PANTHER" id="PTHR41694:SF3">
    <property type="entry name" value="RNA-DIRECTED DNA POLYMERASE-RELATED"/>
    <property type="match status" value="1"/>
</dbReference>
<dbReference type="Pfam" id="PF00540">
    <property type="entry name" value="Gag_p17"/>
    <property type="match status" value="1"/>
</dbReference>
<dbReference type="Pfam" id="PF19317">
    <property type="entry name" value="Gag_p24_C"/>
    <property type="match status" value="1"/>
</dbReference>
<dbReference type="Pfam" id="PF00552">
    <property type="entry name" value="IN_DBD_C"/>
    <property type="match status" value="1"/>
</dbReference>
<dbReference type="Pfam" id="PF02022">
    <property type="entry name" value="Integrase_Zn"/>
    <property type="match status" value="1"/>
</dbReference>
<dbReference type="Pfam" id="PF00075">
    <property type="entry name" value="RNase_H"/>
    <property type="match status" value="1"/>
</dbReference>
<dbReference type="Pfam" id="PF00665">
    <property type="entry name" value="rve"/>
    <property type="match status" value="1"/>
</dbReference>
<dbReference type="Pfam" id="PF00077">
    <property type="entry name" value="RVP"/>
    <property type="match status" value="1"/>
</dbReference>
<dbReference type="Pfam" id="PF00078">
    <property type="entry name" value="RVT_1"/>
    <property type="match status" value="1"/>
</dbReference>
<dbReference type="Pfam" id="PF06815">
    <property type="entry name" value="RVT_connect"/>
    <property type="match status" value="1"/>
</dbReference>
<dbReference type="Pfam" id="PF06817">
    <property type="entry name" value="RVT_thumb"/>
    <property type="match status" value="1"/>
</dbReference>
<dbReference type="Pfam" id="PF00098">
    <property type="entry name" value="zf-CCHC"/>
    <property type="match status" value="2"/>
</dbReference>
<dbReference type="PRINTS" id="PR00234">
    <property type="entry name" value="HIV1MATRIX"/>
</dbReference>
<dbReference type="SMART" id="SM00343">
    <property type="entry name" value="ZnF_C2HC"/>
    <property type="match status" value="2"/>
</dbReference>
<dbReference type="SUPFAM" id="SSF50630">
    <property type="entry name" value="Acid proteases"/>
    <property type="match status" value="1"/>
</dbReference>
<dbReference type="SUPFAM" id="SSF50122">
    <property type="entry name" value="DNA-binding domain of retroviral integrase"/>
    <property type="match status" value="1"/>
</dbReference>
<dbReference type="SUPFAM" id="SSF56672">
    <property type="entry name" value="DNA/RNA polymerases"/>
    <property type="match status" value="1"/>
</dbReference>
<dbReference type="SUPFAM" id="SSF46919">
    <property type="entry name" value="N-terminal Zn binding domain of HIV integrase"/>
    <property type="match status" value="1"/>
</dbReference>
<dbReference type="SUPFAM" id="SSF47836">
    <property type="entry name" value="Retroviral matrix proteins"/>
    <property type="match status" value="1"/>
</dbReference>
<dbReference type="SUPFAM" id="SSF47353">
    <property type="entry name" value="Retrovirus capsid dimerization domain-like"/>
    <property type="match status" value="1"/>
</dbReference>
<dbReference type="SUPFAM" id="SSF47943">
    <property type="entry name" value="Retrovirus capsid protein, N-terminal core domain"/>
    <property type="match status" value="1"/>
</dbReference>
<dbReference type="SUPFAM" id="SSF57756">
    <property type="entry name" value="Retrovirus zinc finger-like domains"/>
    <property type="match status" value="1"/>
</dbReference>
<dbReference type="SUPFAM" id="SSF53098">
    <property type="entry name" value="Ribonuclease H-like"/>
    <property type="match status" value="2"/>
</dbReference>
<dbReference type="PROSITE" id="PS50175">
    <property type="entry name" value="ASP_PROT_RETROV"/>
    <property type="match status" value="1"/>
</dbReference>
<dbReference type="PROSITE" id="PS00141">
    <property type="entry name" value="ASP_PROTEASE"/>
    <property type="match status" value="1"/>
</dbReference>
<dbReference type="PROSITE" id="PS50994">
    <property type="entry name" value="INTEGRASE"/>
    <property type="match status" value="1"/>
</dbReference>
<dbReference type="PROSITE" id="PS51027">
    <property type="entry name" value="INTEGRASE_DBD"/>
    <property type="match status" value="1"/>
</dbReference>
<dbReference type="PROSITE" id="PS50879">
    <property type="entry name" value="RNASE_H_1"/>
    <property type="match status" value="1"/>
</dbReference>
<dbReference type="PROSITE" id="PS50878">
    <property type="entry name" value="RT_POL"/>
    <property type="match status" value="1"/>
</dbReference>
<dbReference type="PROSITE" id="PS50158">
    <property type="entry name" value="ZF_CCHC"/>
    <property type="match status" value="2"/>
</dbReference>
<dbReference type="PROSITE" id="PS50876">
    <property type="entry name" value="ZF_INTEGRASE"/>
    <property type="match status" value="1"/>
</dbReference>
<name>POL_HV1EL</name>
<organismHost>
    <name type="scientific">Homo sapiens</name>
    <name type="common">Human</name>
    <dbReference type="NCBI Taxonomy" id="9606"/>
</organismHost>
<keyword id="KW-1073">Activation of host caspases by virus</keyword>
<keyword id="KW-0014">AIDS</keyword>
<keyword id="KW-0064">Aspartyl protease</keyword>
<keyword id="KW-0167">Capsid protein</keyword>
<keyword id="KW-0229">DNA integration</keyword>
<keyword id="KW-0233">DNA recombination</keyword>
<keyword id="KW-0238">DNA-binding</keyword>
<keyword id="KW-0239">DNA-directed DNA polymerase</keyword>
<keyword id="KW-0255">Endonuclease</keyword>
<keyword id="KW-1262">Eukaryotic host gene expression shutoff by virus</keyword>
<keyword id="KW-1193">Eukaryotic host translation shutoff by virus</keyword>
<keyword id="KW-1032">Host cell membrane</keyword>
<keyword id="KW-1035">Host cytoplasm</keyword>
<keyword id="KW-1039">Host endosome</keyword>
<keyword id="KW-1190">Host gene expression shutoff by virus</keyword>
<keyword id="KW-1043">Host membrane</keyword>
<keyword id="KW-1048">Host nucleus</keyword>
<keyword id="KW-0945">Host-virus interaction</keyword>
<keyword id="KW-0378">Hydrolase</keyword>
<keyword id="KW-0446">Lipid-binding</keyword>
<keyword id="KW-0449">Lipoprotein</keyword>
<keyword id="KW-0460">Magnesium</keyword>
<keyword id="KW-0472">Membrane</keyword>
<keyword id="KW-0479">Metal-binding</keyword>
<keyword id="KW-1119">Modulation of host cell apoptosis by virus</keyword>
<keyword id="KW-0511">Multifunctional enzyme</keyword>
<keyword id="KW-0519">Myristate</keyword>
<keyword id="KW-0540">Nuclease</keyword>
<keyword id="KW-0548">Nucleotidyltransferase</keyword>
<keyword id="KW-0597">Phosphoprotein</keyword>
<keyword id="KW-0645">Protease</keyword>
<keyword id="KW-1185">Reference proteome</keyword>
<keyword id="KW-0677">Repeat</keyword>
<keyword id="KW-0688">Ribosomal frameshifting</keyword>
<keyword id="KW-0694">RNA-binding</keyword>
<keyword id="KW-0695">RNA-directed DNA polymerase</keyword>
<keyword id="KW-0808">Transferase</keyword>
<keyword id="KW-1179">Viral genome integration</keyword>
<keyword id="KW-0543">Viral nucleoprotein</keyword>
<keyword id="KW-1163">Viral penetration into host nucleus</keyword>
<keyword id="KW-1188">Viral release from host cell</keyword>
<keyword id="KW-0946">Virion</keyword>
<keyword id="KW-0917">Virion maturation</keyword>
<keyword id="KW-1160">Virus entry into host cell</keyword>
<keyword id="KW-0862">Zinc</keyword>
<keyword id="KW-0863">Zinc-finger</keyword>
<evidence type="ECO:0000250" key="1"/>
<evidence type="ECO:0000250" key="2">
    <source>
        <dbReference type="UniProtKB" id="P03347"/>
    </source>
</evidence>
<evidence type="ECO:0000250" key="3">
    <source>
        <dbReference type="UniProtKB" id="P03366"/>
    </source>
</evidence>
<evidence type="ECO:0000250" key="4">
    <source>
        <dbReference type="UniProtKB" id="P03367"/>
    </source>
</evidence>
<evidence type="ECO:0000250" key="5">
    <source>
        <dbReference type="UniProtKB" id="P04585"/>
    </source>
</evidence>
<evidence type="ECO:0000250" key="6">
    <source>
        <dbReference type="UniProtKB" id="P12493"/>
    </source>
</evidence>
<evidence type="ECO:0000250" key="7">
    <source>
        <dbReference type="UniProtKB" id="P12497"/>
    </source>
</evidence>
<evidence type="ECO:0000255" key="8"/>
<evidence type="ECO:0000255" key="9">
    <source>
        <dbReference type="PROSITE-ProRule" id="PRU00047"/>
    </source>
</evidence>
<evidence type="ECO:0000255" key="10">
    <source>
        <dbReference type="PROSITE-ProRule" id="PRU00275"/>
    </source>
</evidence>
<evidence type="ECO:0000255" key="11">
    <source>
        <dbReference type="PROSITE-ProRule" id="PRU00405"/>
    </source>
</evidence>
<evidence type="ECO:0000255" key="12">
    <source>
        <dbReference type="PROSITE-ProRule" id="PRU00408"/>
    </source>
</evidence>
<evidence type="ECO:0000255" key="13">
    <source>
        <dbReference type="PROSITE-ProRule" id="PRU00450"/>
    </source>
</evidence>
<evidence type="ECO:0000255" key="14">
    <source>
        <dbReference type="PROSITE-ProRule" id="PRU00457"/>
    </source>
</evidence>
<evidence type="ECO:0000255" key="15">
    <source>
        <dbReference type="PROSITE-ProRule" id="PRU00506"/>
    </source>
</evidence>
<evidence type="ECO:0000255" key="16">
    <source>
        <dbReference type="PROSITE-ProRule" id="PRU10094"/>
    </source>
</evidence>
<evidence type="ECO:0000256" key="17">
    <source>
        <dbReference type="SAM" id="MobiDB-lite"/>
    </source>
</evidence>
<evidence type="ECO:0000305" key="18"/>
<feature type="initiator methionine" description="Removed; by host" evidence="1">
    <location>
        <position position="1"/>
    </location>
</feature>
<feature type="chain" id="PRO_0000261266" description="Gag-Pol polyprotein">
    <location>
        <begin position="2"/>
        <end position="1435"/>
    </location>
</feature>
<feature type="chain" id="PRO_0000042353" description="Matrix protein p17" evidence="1">
    <location>
        <begin position="2"/>
        <end position="132"/>
    </location>
</feature>
<feature type="chain" id="PRO_0000042354" description="Capsid protein p24" evidence="1">
    <location>
        <begin position="133"/>
        <end position="363"/>
    </location>
</feature>
<feature type="peptide" id="PRO_0000042355" description="Spacer peptide 1" evidence="1">
    <location>
        <begin position="364"/>
        <end position="377"/>
    </location>
</feature>
<feature type="chain" id="PRO_0000042356" description="Nucleocapsid protein p7" evidence="1">
    <location>
        <begin position="378"/>
        <end position="433"/>
    </location>
</feature>
<feature type="peptide" id="PRO_0000246714" description="Transframe peptide" evidence="8">
    <location>
        <begin position="434"/>
        <end position="441"/>
    </location>
</feature>
<feature type="chain" id="PRO_0000042357" description="p6-pol" evidence="8">
    <location>
        <begin position="442"/>
        <end position="488"/>
    </location>
</feature>
<feature type="chain" id="PRO_0000038655" description="Protease" evidence="1">
    <location>
        <begin position="489"/>
        <end position="587"/>
    </location>
</feature>
<feature type="chain" id="PRO_0000042358" description="Reverse transcriptase/ribonuclease H" evidence="1">
    <location>
        <begin position="588"/>
        <end position="1147"/>
    </location>
</feature>
<feature type="chain" id="PRO_0000042359" description="p51 RT" evidence="1">
    <location>
        <begin position="588"/>
        <end position="1027"/>
    </location>
</feature>
<feature type="chain" id="PRO_0000042360" description="p15" evidence="1">
    <location>
        <begin position="1028"/>
        <end position="1147"/>
    </location>
</feature>
<feature type="chain" id="PRO_0000042361" description="Integrase" evidence="1">
    <location>
        <begin position="1148"/>
        <end position="1435"/>
    </location>
</feature>
<feature type="domain" description="Peptidase A2" evidence="10">
    <location>
        <begin position="508"/>
        <end position="577"/>
    </location>
</feature>
<feature type="domain" description="Reverse transcriptase" evidence="11">
    <location>
        <begin position="631"/>
        <end position="821"/>
    </location>
</feature>
<feature type="domain" description="RNase H type-1" evidence="12">
    <location>
        <begin position="1021"/>
        <end position="1144"/>
    </location>
</feature>
<feature type="domain" description="Integrase catalytic" evidence="14">
    <location>
        <begin position="1201"/>
        <end position="1351"/>
    </location>
</feature>
<feature type="zinc finger region" description="CCHC-type 1" evidence="9">
    <location>
        <begin position="391"/>
        <end position="408"/>
    </location>
</feature>
<feature type="zinc finger region" description="CCHC-type 2" evidence="9">
    <location>
        <begin position="412"/>
        <end position="429"/>
    </location>
</feature>
<feature type="zinc finger region" description="Integrase-type" evidence="13">
    <location>
        <begin position="1150"/>
        <end position="1191"/>
    </location>
</feature>
<feature type="DNA-binding region" description="Integrase-type" evidence="15">
    <location>
        <begin position="1370"/>
        <end position="1417"/>
    </location>
</feature>
<feature type="region of interest" description="Interaction with Gp41" evidence="7">
    <location>
        <begin position="7"/>
        <end position="31"/>
    </location>
</feature>
<feature type="region of interest" description="Interaction with host CALM1" evidence="5">
    <location>
        <begin position="8"/>
        <end position="43"/>
    </location>
</feature>
<feature type="region of interest" description="Interaction with host AP3D1" evidence="7">
    <location>
        <begin position="12"/>
        <end position="19"/>
    </location>
</feature>
<feature type="region of interest" description="Interaction with membrane phosphatidylinositol 4,5-bisphosphate and RNA" evidence="7">
    <location>
        <begin position="14"/>
        <end position="33"/>
    </location>
</feature>
<feature type="region of interest" description="Interaction with membrane phosphatidylinositol 4,5-bisphosphate" evidence="7">
    <location>
        <begin position="73"/>
        <end position="77"/>
    </location>
</feature>
<feature type="region of interest" description="Disordered" evidence="17">
    <location>
        <begin position="102"/>
        <end position="128"/>
    </location>
</feature>
<feature type="region of interest" description="Interaction with human PPIA/CYPA and NUP153" evidence="7">
    <location>
        <begin position="189"/>
        <end position="227"/>
    </location>
</feature>
<feature type="region of interest" description="Dimerization/Multimerization of capsid protein p24" evidence="5">
    <location>
        <begin position="277"/>
        <end position="363"/>
    </location>
</feature>
<feature type="region of interest" description="Dimerization of protease" evidence="5">
    <location>
        <begin position="489"/>
        <end position="493"/>
    </location>
</feature>
<feature type="region of interest" description="Dimerization of protease" evidence="5">
    <location>
        <begin position="537"/>
        <end position="543"/>
    </location>
</feature>
<feature type="region of interest" description="Dimerization of protease" evidence="5">
    <location>
        <begin position="576"/>
        <end position="588"/>
    </location>
</feature>
<feature type="region of interest" description="RT 'primer grip'" evidence="1">
    <location>
        <begin position="814"/>
        <end position="822"/>
    </location>
</feature>
<feature type="short sequence motif" description="Nuclear export signal" evidence="1">
    <location>
        <begin position="16"/>
        <end position="22"/>
    </location>
</feature>
<feature type="short sequence motif" description="Nuclear localization signal" evidence="1">
    <location>
        <begin position="26"/>
        <end position="32"/>
    </location>
</feature>
<feature type="short sequence motif" description="Tryptophan repeat motif" evidence="1">
    <location>
        <begin position="985"/>
        <end position="1001"/>
    </location>
</feature>
<feature type="active site" description="For protease activity; shared with dimeric partner" evidence="16">
    <location>
        <position position="513"/>
    </location>
</feature>
<feature type="binding site" evidence="1">
    <location>
        <position position="697"/>
    </location>
    <ligand>
        <name>Mg(2+)</name>
        <dbReference type="ChEBI" id="CHEBI:18420"/>
        <label>1</label>
        <note>catalytic; for reverse transcriptase activity</note>
    </ligand>
</feature>
<feature type="binding site" evidence="1">
    <location>
        <position position="772"/>
    </location>
    <ligand>
        <name>Mg(2+)</name>
        <dbReference type="ChEBI" id="CHEBI:18420"/>
        <label>1</label>
        <note>catalytic; for reverse transcriptase activity</note>
    </ligand>
</feature>
<feature type="binding site" evidence="1">
    <location>
        <position position="773"/>
    </location>
    <ligand>
        <name>Mg(2+)</name>
        <dbReference type="ChEBI" id="CHEBI:18420"/>
        <label>1</label>
        <note>catalytic; for reverse transcriptase activity</note>
    </ligand>
</feature>
<feature type="binding site" evidence="1">
    <location>
        <position position="1030"/>
    </location>
    <ligand>
        <name>Mg(2+)</name>
        <dbReference type="ChEBI" id="CHEBI:18420"/>
        <label>2</label>
        <note>catalytic; for RNase H activity</note>
    </ligand>
</feature>
<feature type="binding site" evidence="1">
    <location>
        <position position="1065"/>
    </location>
    <ligand>
        <name>Mg(2+)</name>
        <dbReference type="ChEBI" id="CHEBI:18420"/>
        <label>2</label>
        <note>catalytic; for RNase H activity</note>
    </ligand>
</feature>
<feature type="binding site" evidence="1">
    <location>
        <position position="1085"/>
    </location>
    <ligand>
        <name>Mg(2+)</name>
        <dbReference type="ChEBI" id="CHEBI:18420"/>
        <label>2</label>
        <note>catalytic; for RNase H activity</note>
    </ligand>
</feature>
<feature type="binding site" evidence="1">
    <location>
        <position position="1136"/>
    </location>
    <ligand>
        <name>Mg(2+)</name>
        <dbReference type="ChEBI" id="CHEBI:18420"/>
        <label>2</label>
        <note>catalytic; for RNase H activity</note>
    </ligand>
</feature>
<feature type="binding site" evidence="13">
    <location>
        <position position="1159"/>
    </location>
    <ligand>
        <name>Zn(2+)</name>
        <dbReference type="ChEBI" id="CHEBI:29105"/>
    </ligand>
</feature>
<feature type="binding site" evidence="13">
    <location>
        <position position="1163"/>
    </location>
    <ligand>
        <name>Zn(2+)</name>
        <dbReference type="ChEBI" id="CHEBI:29105"/>
    </ligand>
</feature>
<feature type="binding site" evidence="13">
    <location>
        <position position="1187"/>
    </location>
    <ligand>
        <name>Zn(2+)</name>
        <dbReference type="ChEBI" id="CHEBI:29105"/>
    </ligand>
</feature>
<feature type="binding site" evidence="13">
    <location>
        <position position="1190"/>
    </location>
    <ligand>
        <name>Zn(2+)</name>
        <dbReference type="ChEBI" id="CHEBI:29105"/>
    </ligand>
</feature>
<feature type="binding site" evidence="1">
    <location>
        <position position="1211"/>
    </location>
    <ligand>
        <name>Mg(2+)</name>
        <dbReference type="ChEBI" id="CHEBI:18420"/>
        <label>3</label>
        <note>catalytic; for integrase activity</note>
    </ligand>
</feature>
<feature type="binding site" evidence="1">
    <location>
        <position position="1263"/>
    </location>
    <ligand>
        <name>Mg(2+)</name>
        <dbReference type="ChEBI" id="CHEBI:18420"/>
        <label>3</label>
        <note>catalytic; for integrase activity</note>
    </ligand>
</feature>
<feature type="binding site" evidence="5">
    <location>
        <position position="1299"/>
    </location>
    <ligand>
        <name>Mg(2+)</name>
        <dbReference type="ChEBI" id="CHEBI:18420"/>
        <label>3</label>
        <note>catalytic; for integrase activity</note>
    </ligand>
</feature>
<feature type="site" description="Cleavage; by viral protease" evidence="1">
    <location>
        <begin position="132"/>
        <end position="133"/>
    </location>
</feature>
<feature type="site" description="Cis/trans isomerization of proline peptide bond; by human PPIA/CYPA" evidence="1">
    <location>
        <begin position="221"/>
        <end position="222"/>
    </location>
</feature>
<feature type="site" description="Cleavage; by viral protease" evidence="1">
    <location>
        <begin position="363"/>
        <end position="364"/>
    </location>
</feature>
<feature type="site" description="Cleavage; by viral protease" evidence="1">
    <location>
        <begin position="377"/>
        <end position="378"/>
    </location>
</feature>
<feature type="site" description="Cleavage; by viral protease" evidence="8">
    <location>
        <begin position="433"/>
        <end position="434"/>
    </location>
</feature>
<feature type="site" description="Cleavage; by viral protease" evidence="1">
    <location>
        <begin position="441"/>
        <end position="442"/>
    </location>
</feature>
<feature type="site" description="Cleavage; by viral protease" evidence="1">
    <location>
        <begin position="488"/>
        <end position="489"/>
    </location>
</feature>
<feature type="site" description="Cleavage; by viral protease" evidence="1">
    <location>
        <begin position="587"/>
        <end position="588"/>
    </location>
</feature>
<feature type="site" description="Essential for RT p66/p51 heterodimerization" evidence="1">
    <location>
        <position position="988"/>
    </location>
</feature>
<feature type="site" description="Essential for RT p66/p51 heterodimerization" evidence="1">
    <location>
        <position position="1001"/>
    </location>
</feature>
<feature type="site" description="Cleavage; by viral protease; partial" evidence="1">
    <location>
        <begin position="1027"/>
        <end position="1028"/>
    </location>
</feature>
<feature type="site" description="Cleavage; by viral protease" evidence="1">
    <location>
        <begin position="1147"/>
        <end position="1148"/>
    </location>
</feature>
<feature type="modified residue" description="Phosphotyrosine; by host" evidence="1">
    <location>
        <position position="132"/>
    </location>
</feature>
<feature type="lipid moiety-binding region" description="N-myristoyl glycine; by host" evidence="1">
    <location>
        <position position="2"/>
    </location>
</feature>
<proteinExistence type="inferred from homology"/>
<comment type="function">
    <molecule>Gag-Pol polyprotein</molecule>
    <text evidence="1">Mediates, with Gag polyprotein, the essential events in virion assembly, including binding the plasma membrane, making the protein-protein interactions necessary to create spherical particles, recruiting the viral Env proteins, and packaging the genomic RNA via direct interactions with the RNA packaging sequence (Psi). Gag-Pol polyprotein may regulate its own translation, by the binding genomic RNA in the 5'-UTR. At low concentration, the polyprotein would promote translation, whereas at high concentration, the polyprotein would encapsidate genomic RNA and then shut off translation.</text>
</comment>
<comment type="function">
    <molecule>Matrix protein p17</molecule>
    <text evidence="7">Targets the polyprotein to the plasma membrane via a multipartite membrane-binding signal, that includes its myristoylated N-terminus. Matrix protein is part of the pre-integration complex. Implicated in the release from host cell mediated by Vpu. Binds to RNA.</text>
</comment>
<comment type="function">
    <molecule>Capsid protein p24</molecule>
    <text evidence="5 7">Forms the conical core that encapsulates the genomic RNA-nucleocapsid complex in the virion. Most core are conical, with only 7% tubular. The core is constituted by capsid protein hexamer subunits. The core is disassembled soon after virion entry (By similarity). Host restriction factors such as TRIM5-alpha or TRIMCyp bind retroviral capsids and cause premature capsid disassembly, leading to blocks in reverse transcription. Capsid restriction by TRIM5 is one of the factors which restricts HIV-1 to the human species. Host PIN1 apparently facilitates the virion uncoating. On the other hand, interactions with PDZD8 or CYPA stabilize the capsid.</text>
</comment>
<comment type="function">
    <molecule>Nucleocapsid protein p7</molecule>
    <text evidence="5">Encapsulates and protects viral dimeric unspliced genomic RNA (gRNA). Binds these RNAs through its zinc fingers. Acts as a nucleic acid chaperone which is involved in rearangement of nucleic acid secondary structure during gRNA retrotranscription. Also facilitates template switch leading to recombination. As part of the polyprotein, participates in gRNA dimerization, packaging, tRNA incorporation and virion assembly.</text>
</comment>
<comment type="function">
    <molecule>Protease</molecule>
    <text evidence="5 10">Aspartyl protease that mediates proteolytic cleavages of Gag and Gag-Pol polyproteins during or shortly after the release of the virion from the plasma membrane. Cleavages take place as an ordered, step-wise cascade to yield mature proteins. This process is called maturation. Displays maximal activity during the budding process just prior to particle release from the cell. Also cleaves Nef and Vif, probably concomitantly with viral structural proteins on maturation of virus particles. Hydrolyzes host EIF4GI and PABP1 in order to shut off the capped cellular mRNA translation. The resulting inhibition of cellular protein synthesis serves to ensure maximal viral gene expression and to evade host immune response. Also mediates cleavage of host YTHDF3. Mediates cleavage of host CARD8, thereby activating the CARD8 inflammasome, leading to the clearance of latent HIV-1 in patient CD4(+) T-cells after viral reactivation; in contrast, HIV-1 can evade CARD8-sensing when its protease remains inactive in infected cells prior to viral budding (By similarity).</text>
</comment>
<comment type="function">
    <molecule>Reverse transcriptase/ribonuclease H</molecule>
    <text evidence="5">Multifunctional enzyme that converts the viral RNA genome into dsDNA in the cytoplasm, shortly after virus entry into the cell. This enzyme displays a DNA polymerase activity that can copy either DNA or RNA templates, and a ribonuclease H (RNase H) activity that cleaves the RNA strand of RNA-DNA heteroduplexes in a partially processive 3' to 5' endonucleasic mode. Conversion of viral genomic RNA into dsDNA requires many steps. A tRNA(3)-Lys binds to the primer-binding site (PBS) situated at the 5'-end of the viral RNA. RT uses the 3' end of the tRNA primer to perform a short round of RNA-dependent minus-strand DNA synthesis. The reading proceeds through the U5 region and ends after the repeated (R) region which is present at both ends of viral RNA. The portion of the RNA-DNA heteroduplex is digested by the RNase H, resulting in a ssDNA product attached to the tRNA primer. This ssDNA/tRNA hybridizes with the identical R region situated at the 3' end of viral RNA. This template exchange, known as minus-strand DNA strong stop transfer, can be either intra- or intermolecular. RT uses the 3' end of this newly synthesized short ssDNA to perform the RNA-dependent minus-strand DNA synthesis of the whole template. RNase H digests the RNA template except for two polypurine tracts (PPTs) situated at the 5'-end and near the center of the genome. It is not clear if both polymerase and RNase H activities are simultaneous. RNase H probably can proceed both in a polymerase-dependent (RNA cut into small fragments by the same RT performing DNA synthesis) and a polymerase-independent mode (cleavage of remaining RNA fragments by free RTs). Secondly, RT performs DNA-directed plus-strand DNA synthesis using the PPTs that have not been removed by RNase H as primers. PPTs and tRNA primers are then removed by RNase H. The 3' and 5' ssDNA PBS regions hybridize to form a circular dsDNA intermediate. Strand displacement synthesis by RT to the PBS and PPT ends produces a blunt ended, linear dsDNA copy of the viral genome that includes long terminal repeats (LTRs) at both ends.</text>
</comment>
<comment type="function">
    <molecule>Integrase</molecule>
    <text evidence="5">Catalyzes viral DNA integration into the host chromosome, by performing a series of DNA cutting and joining reactions. This enzyme activity takes place after virion entry into a cell and reverse transcription of the RNA genome in dsDNA. The first step in the integration process is 3' processing. This step requires a complex comprising the viral genome, matrix protein, Vpr and integrase. This complex is called the pre-integration complex (PIC). The integrase protein removes 2 nucleotides from each 3' end of the viral DNA, leaving recessed CA OH's at the 3' ends. In the second step, the PIC enters cell nucleus. This process is mediated through integrase and Vpr proteins, and allows the virus to infect a non dividing cell. This ability to enter the nucleus is specific of lentiviruses, other retroviruses cannot and rely on cell division to access cell chromosomes. In the third step, termed strand transfer, the integrase protein joins the previously processed 3' ends to the 5' ends of strands of target cellular DNA at the site of integration. The 5'-ends are produced by integrase-catalyzed staggered cuts, 5 bp apart. A Y-shaped, gapped, recombination intermediate results, with the 5'-ends of the viral DNA strands and the 3' ends of target DNA strands remaining unjoined, flanking a gap of 5 bp. The last step is viral DNA integration into host chromosome. This involves host DNA repair synthesis in which the 5 bp gaps between the unjoined strands are filled in and then ligated. Since this process occurs at both cuts flanking the HIV genome, a 5 bp duplication of host DNA is produced at the ends of HIV-1 integration. Alternatively, Integrase may catalyze the excision of viral DNA just after strand transfer, this is termed disintegration.</text>
</comment>
<comment type="catalytic activity">
    <reaction evidence="10">
        <text>Specific for a P1 residue that is hydrophobic, and P1' variable, but often Pro.</text>
        <dbReference type="EC" id="3.4.23.16"/>
    </reaction>
</comment>
<comment type="catalytic activity">
    <reaction evidence="1">
        <text>Endohydrolysis of RNA in RNA/DNA hybrids. Three different cleavage modes: 1. sequence-specific internal cleavage of RNA. Human immunodeficiency virus type 1 and Moloney murine leukemia virus enzymes prefer to cleave the RNA strand one nucleotide away from the RNA-DNA junction. 2. RNA 5'-end directed cleavage 13-19 nucleotides from the RNA end. 3. DNA 3'-end directed cleavage 15-20 nucleotides away from the primer terminus.</text>
        <dbReference type="EC" id="3.1.26.13"/>
    </reaction>
</comment>
<comment type="catalytic activity">
    <reaction evidence="1">
        <text>3'-end directed exonucleolytic cleavage of viral RNA-DNA hybrid.</text>
        <dbReference type="EC" id="3.1.13.2"/>
    </reaction>
</comment>
<comment type="catalytic activity">
    <reaction evidence="11">
        <text>DNA(n) + a 2'-deoxyribonucleoside 5'-triphosphate = DNA(n+1) + diphosphate</text>
        <dbReference type="Rhea" id="RHEA:22508"/>
        <dbReference type="Rhea" id="RHEA-COMP:17339"/>
        <dbReference type="Rhea" id="RHEA-COMP:17340"/>
        <dbReference type="ChEBI" id="CHEBI:33019"/>
        <dbReference type="ChEBI" id="CHEBI:61560"/>
        <dbReference type="ChEBI" id="CHEBI:173112"/>
        <dbReference type="EC" id="2.7.7.49"/>
    </reaction>
</comment>
<comment type="catalytic activity">
    <reaction evidence="11">
        <text>DNA(n) + a 2'-deoxyribonucleoside 5'-triphosphate = DNA(n+1) + diphosphate</text>
        <dbReference type="Rhea" id="RHEA:22508"/>
        <dbReference type="Rhea" id="RHEA-COMP:17339"/>
        <dbReference type="Rhea" id="RHEA-COMP:17340"/>
        <dbReference type="ChEBI" id="CHEBI:33019"/>
        <dbReference type="ChEBI" id="CHEBI:61560"/>
        <dbReference type="ChEBI" id="CHEBI:173112"/>
        <dbReference type="EC" id="2.7.7.7"/>
    </reaction>
</comment>
<comment type="cofactor">
    <cofactor evidence="1">
        <name>Mg(2+)</name>
        <dbReference type="ChEBI" id="CHEBI:18420"/>
    </cofactor>
    <text evidence="1">Binds 2 magnesium ions for reverse transcriptase polymerase activity.</text>
</comment>
<comment type="cofactor">
    <cofactor evidence="1">
        <name>Mg(2+)</name>
        <dbReference type="ChEBI" id="CHEBI:18420"/>
    </cofactor>
    <text evidence="1">Binds 2 magnesium ions for ribonuclease H (RNase H) activity. Substrate-binding is a precondition for magnesium binding.</text>
</comment>
<comment type="cofactor">
    <cofactor evidence="1">
        <name>Mg(2+)</name>
        <dbReference type="ChEBI" id="CHEBI:18420"/>
    </cofactor>
    <text evidence="1">Magnesium ions are required for integrase activity. Binds at least 1, maybe 2 magnesium ions.</text>
</comment>
<comment type="activity regulation">
    <text evidence="1">Protease: The viral protease is inhibited by many synthetic protease inhibitors (PIs), such as amprenavir, atazanavir, indinavir, loprinavir, nelfinavir, ritonavir and saquinavir. Use of protease inhibitors in tritherapy regimens permit more ambitious therapeutic strategies. Reverse transcriptase/ribonuclease H: RT can be inhibited either by nucleoside RT inhibitors (NRTIs) or by non nucleoside RT inhibitors (NNRTIs). NRTIs act as chain terminators, whereas NNRTIs inhibit DNA polymerization by binding a small hydrophobic pocket near the RT active site and inducing an allosteric change in this region. Classical NRTIs are abacavir, adefovir (PMEA), didanosine (ddI), lamivudine (3TC), stavudine (d4T), tenofovir (PMPA), zalcitabine (ddC), and zidovudine (AZT). Classical NNRTIs are atevirdine (BHAP U-87201E), delavirdine, efavirenz (DMP-266), emivirine (I-EBU), and nevirapine (BI-RG-587). The tritherapies used as a basic effective treatment of AIDS associate two NRTIs and one NNRTI.</text>
</comment>
<comment type="subunit">
    <molecule>Matrix protein p17</molecule>
    <text evidence="5 7">Homotrimer; further assembles as hexamers of trimers (By similarity). Interacts with gp41 (via C-terminus) (By similarity). Interacts with host CALM1; this interaction induces a conformational change in the Matrix protein, triggering exposure of the myristate group (By similarity). Interacts with host AP3D1; this interaction allows the polyprotein trafficking to multivesicular bodies during virus assembly (By similarity). Part of the pre-integration complex (PIC) which is composed of viral genome, matrix protein, Vpr and integrase (By similarity).</text>
</comment>
<comment type="subunit">
    <molecule>Capsid protein p24</molecule>
    <text evidence="5 7">Homodimer; the homodimer further multimerizes as homohexamers or homopentamers. Interacts with human PPIA/CYPA (By similarity); This interaction stabilizes the capsid. Interacts with human NUP153 (By similarity). Interacts with host PDZD8; this interaction stabilizes the capsid (By similarity). Interacts with monkey TRIM5; this interaction destabilizes the capsid (By similarity).</text>
</comment>
<comment type="subunit">
    <molecule>Protease</molecule>
    <text evidence="5 7">Homodimer, whose active site consists of two apposed aspartic acid residues.</text>
</comment>
<comment type="subunit">
    <molecule>Reverse transcriptase/ribonuclease H</molecule>
    <text evidence="3">Heterodimer of p66 RT and p51 RT (RT p66/p51) (By similarity). Heterodimerization of RT is essential for DNA polymerase activity (By similarity). The overall folding of the subdomains is similar in p66 RT and p51 RT but the spatial arrangements of the subdomains are dramatically different (By similarity).</text>
</comment>
<comment type="subunit">
    <molecule>Integrase</molecule>
    <text evidence="4 5 7">Homotetramer; may further associate as a homohexadecamer (By similarity). Part of the pre-integration complex (PIC) which is composed of viral genome, matrix protein, Vpr and integrase. Interacts with human SMARCB1/INI1 and human PSIP1/LEDGF isoform 1. Interacts with human KPNA3; this interaction might play a role in nuclear import of the pre-integration complex (By similarity). Interacts with human NUP153; this interaction might play a role in nuclear import of the pre-integration complex (By similarity).</text>
</comment>
<comment type="subcellular location">
    <molecule>Gag-Pol polyprotein</molecule>
    <subcellularLocation>
        <location>Host cell membrane</location>
        <topology>Lipid-anchor</topology>
    </subcellularLocation>
    <subcellularLocation>
        <location>Host endosome</location>
        <location>Host multivesicular body</location>
    </subcellularLocation>
    <text evidence="7">These locations are linked to virus assembly sites. The main location is the cell membrane, but under some circumstances, late endosomal compartments can serve as productive sites for virion assembly.</text>
</comment>
<comment type="subcellular location">
    <molecule>Matrix protein p17</molecule>
    <subcellularLocation>
        <location>Virion membrane</location>
        <topology evidence="18">Lipid-anchor</topology>
    </subcellularLocation>
    <subcellularLocation>
        <location evidence="1">Host nucleus</location>
    </subcellularLocation>
    <subcellularLocation>
        <location evidence="1">Host cytoplasm</location>
    </subcellularLocation>
</comment>
<comment type="subcellular location">
    <molecule>Capsid protein p24</molecule>
    <subcellularLocation>
        <location evidence="18">Virion</location>
    </subcellularLocation>
</comment>
<comment type="subcellular location">
    <molecule>Nucleocapsid protein p7</molecule>
    <subcellularLocation>
        <location evidence="18">Virion</location>
    </subcellularLocation>
</comment>
<comment type="subcellular location">
    <molecule>Reverse transcriptase/ribonuclease H</molecule>
    <subcellularLocation>
        <location evidence="18">Virion</location>
    </subcellularLocation>
</comment>
<comment type="subcellular location">
    <molecule>Integrase</molecule>
    <subcellularLocation>
        <location evidence="18">Virion</location>
    </subcellularLocation>
    <subcellularLocation>
        <location evidence="18">Host nucleus</location>
    </subcellularLocation>
    <subcellularLocation>
        <location evidence="18">Host cytoplasm</location>
    </subcellularLocation>
    <text evidence="18">Nuclear at initial phase, cytoplasmic at assembly.</text>
</comment>
<comment type="alternative products">
    <event type="ribosomal frameshifting"/>
    <isoform>
        <id>P04589-1</id>
        <name>Gag-Pol polyprotein</name>
        <sequence type="displayed"/>
    </isoform>
    <isoform>
        <id>P04592-1</id>
        <name>Gag polyprotein</name>
        <sequence type="external"/>
    </isoform>
    <text>Translation results in the formation of the Gag polyprotein most of the time. Ribosomal frameshifting at the gag-pol genes boundary occurs at low frequency and produces the Gag-Pol polyprotein. This strategy of translation probably allows the virus to modulate the quantity of each viral protein. Maintenance of a correct Gag to Gag-Pol ratio is essential for RNA dimerization and viral infectivity.</text>
</comment>
<comment type="domain">
    <molecule>Reverse transcriptase/ribonuclease H</molecule>
    <text evidence="1">RT is structured in five subdomains: finger, palm, thumb, connection and RNase H. Within the palm subdomain, the 'primer grip' region is thought to be involved in the positioning of the primer terminus for accommodating the incoming nucleotide. The RNase H domain stabilizes the association of RT with primer-template.</text>
</comment>
<comment type="domain">
    <molecule>Reverse transcriptase/ribonuclease H</molecule>
    <text evidence="1">The tryptophan repeat motif is involved in RT p66/p51 dimerization (By similarity).</text>
</comment>
<comment type="domain">
    <molecule>Integrase</molecule>
    <text evidence="1">The core domain contains the D-x(n)-D-x(35)-E motif, named for the phylogenetically conserved glutamic acid and aspartic acid residues and the invariant 35 amino acid spacing between the second and third acidic residues. Each acidic residue of the D,D(35)E motif is independently essential for the 3'-processing and strand transfer activities of purified integrase protein.</text>
</comment>
<comment type="PTM">
    <molecule>Gag-Pol polyprotein</molecule>
    <text evidence="5 11">Specific enzymatic cleavages by the viral protease yield mature proteins. The protease is released by autocatalytic cleavage. The polyprotein is cleaved during and after budding, this process is termed maturation. Proteolytic cleavage of p66 RT removes the RNase H domain to yield the p51 RT subunit. Nucleocapsid protein p7 might be further cleaved after virus entry.</text>
</comment>
<comment type="PTM">
    <molecule>Matrix protein p17</molecule>
    <text evidence="5">Tyrosine phosphorylated presumably in the virion by a host kinase. Phosphorylation is apparently not a major regulator of membrane association.</text>
</comment>
<comment type="PTM">
    <molecule>Capsid protein p24</molecule>
    <text evidence="6">Phosphorylated possibly by host MAPK1; this phosphorylation is necessary for Pin1-mediated virion uncoating.</text>
</comment>
<comment type="PTM">
    <molecule>Nucleocapsid protein p7</molecule>
    <text evidence="2">Methylated by host PRMT6, impairing its function by reducing RNA annealing and the initiation of reverse transcription.</text>
</comment>
<comment type="miscellaneous">
    <molecule>Reverse transcriptase/ribonuclease H</molecule>
    <text evidence="1">Error-prone enzyme that lacks a proof-reading function. High mutations rate is a direct consequence of this characteristic. RT also displays frequent template switching leading to high recombination rate. Recombination mostly occurs between homologous regions of the two copackaged RNA genomes. If these two RNA molecules derive from different viral strains, reverse transcription will give rise to highly recombinated proviral DNAs.</text>
</comment>
<comment type="miscellaneous">
    <text>HIV-1 lineages are divided in three main groups, M (for Major), O (for Outlier), and N (for New, or Non-M, Non-O). The vast majority of strains found worldwide belong to the group M. Group O seems to be endemic to and largely confined to Cameroon and neighboring countries in West Central Africa, where these viruses represent a small minority of HIV-1 strains. The group N is represented by a limited number of isolates from Cameroonian persons. The group M is further subdivided in 9 clades or subtypes (A to D, F to H, J and K).</text>
</comment>
<comment type="miscellaneous">
    <text>Resistance to inhibitors associated with mutations are observed both in viral protease and in reverse transcriptase. Most of the time, single mutations confer only a modest reduction in drug susceptibility. Combination of several mutations is usually required to develop a high-level drug resistance. These mutations are predominantly found in clade B viruses and not in other genotypes. They are listed in the clade B representative isolate HXB2 (AC P04585).</text>
</comment>
<comment type="miscellaneous">
    <molecule>Isoform Gag-Pol polyprotein</molecule>
    <text>Produced by -1 ribosomal frameshifting.</text>
</comment>
<comment type="online information" name="HIV drug resistance mutations">
    <link uri="https://www.iasusa.org/hiv-drug-resistance/hiv-drug-resistance-mutations/"/>
</comment>
<comment type="online information" name="hivdb">
    <link uri="https://hivdb.stanford.edu"/>
    <text>HIV drug resistance database</text>
</comment>